<feature type="chain" id="PRO_0000313438" description="DNA ligase">
    <location>
        <begin position="1"/>
        <end position="671"/>
    </location>
</feature>
<feature type="domain" description="BRCT" evidence="1">
    <location>
        <begin position="593"/>
        <end position="671"/>
    </location>
</feature>
<feature type="active site" description="N6-AMP-lysine intermediate" evidence="1">
    <location>
        <position position="115"/>
    </location>
</feature>
<feature type="binding site" evidence="1">
    <location>
        <begin position="32"/>
        <end position="36"/>
    </location>
    <ligand>
        <name>NAD(+)</name>
        <dbReference type="ChEBI" id="CHEBI:57540"/>
    </ligand>
</feature>
<feature type="binding site" evidence="1">
    <location>
        <begin position="81"/>
        <end position="82"/>
    </location>
    <ligand>
        <name>NAD(+)</name>
        <dbReference type="ChEBI" id="CHEBI:57540"/>
    </ligand>
</feature>
<feature type="binding site" evidence="1">
    <location>
        <position position="113"/>
    </location>
    <ligand>
        <name>NAD(+)</name>
        <dbReference type="ChEBI" id="CHEBI:57540"/>
    </ligand>
</feature>
<feature type="binding site" evidence="1">
    <location>
        <position position="136"/>
    </location>
    <ligand>
        <name>NAD(+)</name>
        <dbReference type="ChEBI" id="CHEBI:57540"/>
    </ligand>
</feature>
<feature type="binding site" evidence="1">
    <location>
        <position position="173"/>
    </location>
    <ligand>
        <name>NAD(+)</name>
        <dbReference type="ChEBI" id="CHEBI:57540"/>
    </ligand>
</feature>
<feature type="binding site" evidence="1">
    <location>
        <position position="290"/>
    </location>
    <ligand>
        <name>NAD(+)</name>
        <dbReference type="ChEBI" id="CHEBI:57540"/>
    </ligand>
</feature>
<feature type="binding site" evidence="1">
    <location>
        <position position="314"/>
    </location>
    <ligand>
        <name>NAD(+)</name>
        <dbReference type="ChEBI" id="CHEBI:57540"/>
    </ligand>
</feature>
<feature type="binding site" evidence="1">
    <location>
        <position position="408"/>
    </location>
    <ligand>
        <name>Zn(2+)</name>
        <dbReference type="ChEBI" id="CHEBI:29105"/>
    </ligand>
</feature>
<feature type="binding site" evidence="1">
    <location>
        <position position="411"/>
    </location>
    <ligand>
        <name>Zn(2+)</name>
        <dbReference type="ChEBI" id="CHEBI:29105"/>
    </ligand>
</feature>
<feature type="binding site" evidence="1">
    <location>
        <position position="426"/>
    </location>
    <ligand>
        <name>Zn(2+)</name>
        <dbReference type="ChEBI" id="CHEBI:29105"/>
    </ligand>
</feature>
<feature type="binding site" evidence="1">
    <location>
        <position position="432"/>
    </location>
    <ligand>
        <name>Zn(2+)</name>
        <dbReference type="ChEBI" id="CHEBI:29105"/>
    </ligand>
</feature>
<organism>
    <name type="scientific">Shigella sonnei (strain Ss046)</name>
    <dbReference type="NCBI Taxonomy" id="300269"/>
    <lineage>
        <taxon>Bacteria</taxon>
        <taxon>Pseudomonadati</taxon>
        <taxon>Pseudomonadota</taxon>
        <taxon>Gammaproteobacteria</taxon>
        <taxon>Enterobacterales</taxon>
        <taxon>Enterobacteriaceae</taxon>
        <taxon>Shigella</taxon>
    </lineage>
</organism>
<name>DNLJ_SHISS</name>
<evidence type="ECO:0000255" key="1">
    <source>
        <dbReference type="HAMAP-Rule" id="MF_01588"/>
    </source>
</evidence>
<comment type="function">
    <text evidence="1">DNA ligase that catalyzes the formation of phosphodiester linkages between 5'-phosphoryl and 3'-hydroxyl groups in double-stranded DNA using NAD as a coenzyme and as the energy source for the reaction. It is essential for DNA replication and repair of damaged DNA.</text>
</comment>
<comment type="catalytic activity">
    <reaction evidence="1">
        <text>NAD(+) + (deoxyribonucleotide)n-3'-hydroxyl + 5'-phospho-(deoxyribonucleotide)m = (deoxyribonucleotide)n+m + AMP + beta-nicotinamide D-nucleotide.</text>
        <dbReference type="EC" id="6.5.1.2"/>
    </reaction>
</comment>
<comment type="cofactor">
    <cofactor evidence="1">
        <name>Mg(2+)</name>
        <dbReference type="ChEBI" id="CHEBI:18420"/>
    </cofactor>
    <cofactor evidence="1">
        <name>Mn(2+)</name>
        <dbReference type="ChEBI" id="CHEBI:29035"/>
    </cofactor>
</comment>
<comment type="similarity">
    <text evidence="1">Belongs to the NAD-dependent DNA ligase family. LigA subfamily.</text>
</comment>
<proteinExistence type="inferred from homology"/>
<dbReference type="EC" id="6.5.1.2" evidence="1"/>
<dbReference type="EMBL" id="CP000038">
    <property type="protein sequence ID" value="AAZ89131.1"/>
    <property type="molecule type" value="Genomic_DNA"/>
</dbReference>
<dbReference type="RefSeq" id="WP_000443667.1">
    <property type="nucleotide sequence ID" value="NC_007384.1"/>
</dbReference>
<dbReference type="SMR" id="Q3YZD1"/>
<dbReference type="GeneID" id="93774720"/>
<dbReference type="KEGG" id="ssn:SSON_2500"/>
<dbReference type="HOGENOM" id="CLU_007764_2_1_6"/>
<dbReference type="Proteomes" id="UP000002529">
    <property type="component" value="Chromosome"/>
</dbReference>
<dbReference type="GO" id="GO:0005829">
    <property type="term" value="C:cytosol"/>
    <property type="evidence" value="ECO:0007669"/>
    <property type="project" value="TreeGrafter"/>
</dbReference>
<dbReference type="GO" id="GO:0003677">
    <property type="term" value="F:DNA binding"/>
    <property type="evidence" value="ECO:0007669"/>
    <property type="project" value="InterPro"/>
</dbReference>
<dbReference type="GO" id="GO:0003911">
    <property type="term" value="F:DNA ligase (NAD+) activity"/>
    <property type="evidence" value="ECO:0007669"/>
    <property type="project" value="UniProtKB-UniRule"/>
</dbReference>
<dbReference type="GO" id="GO:0046872">
    <property type="term" value="F:metal ion binding"/>
    <property type="evidence" value="ECO:0007669"/>
    <property type="project" value="UniProtKB-KW"/>
</dbReference>
<dbReference type="GO" id="GO:0006281">
    <property type="term" value="P:DNA repair"/>
    <property type="evidence" value="ECO:0007669"/>
    <property type="project" value="UniProtKB-KW"/>
</dbReference>
<dbReference type="GO" id="GO:0006260">
    <property type="term" value="P:DNA replication"/>
    <property type="evidence" value="ECO:0007669"/>
    <property type="project" value="UniProtKB-KW"/>
</dbReference>
<dbReference type="CDD" id="cd17748">
    <property type="entry name" value="BRCT_DNA_ligase_like"/>
    <property type="match status" value="1"/>
</dbReference>
<dbReference type="CDD" id="cd00114">
    <property type="entry name" value="LIGANc"/>
    <property type="match status" value="1"/>
</dbReference>
<dbReference type="FunFam" id="1.10.150.20:FF:000006">
    <property type="entry name" value="DNA ligase"/>
    <property type="match status" value="1"/>
</dbReference>
<dbReference type="FunFam" id="1.10.150.20:FF:000007">
    <property type="entry name" value="DNA ligase"/>
    <property type="match status" value="1"/>
</dbReference>
<dbReference type="FunFam" id="1.10.287.610:FF:000002">
    <property type="entry name" value="DNA ligase"/>
    <property type="match status" value="1"/>
</dbReference>
<dbReference type="FunFam" id="2.40.50.140:FF:000012">
    <property type="entry name" value="DNA ligase"/>
    <property type="match status" value="1"/>
</dbReference>
<dbReference type="FunFam" id="3.30.470.30:FF:000001">
    <property type="entry name" value="DNA ligase"/>
    <property type="match status" value="1"/>
</dbReference>
<dbReference type="FunFam" id="3.40.50.10190:FF:000004">
    <property type="entry name" value="DNA ligase"/>
    <property type="match status" value="1"/>
</dbReference>
<dbReference type="FunFam" id="6.20.10.30:FF:000001">
    <property type="entry name" value="DNA ligase"/>
    <property type="match status" value="1"/>
</dbReference>
<dbReference type="Gene3D" id="6.20.10.30">
    <property type="match status" value="1"/>
</dbReference>
<dbReference type="Gene3D" id="1.10.150.20">
    <property type="entry name" value="5' to 3' exonuclease, C-terminal subdomain"/>
    <property type="match status" value="2"/>
</dbReference>
<dbReference type="Gene3D" id="3.40.50.10190">
    <property type="entry name" value="BRCT domain"/>
    <property type="match status" value="1"/>
</dbReference>
<dbReference type="Gene3D" id="3.30.470.30">
    <property type="entry name" value="DNA ligase/mRNA capping enzyme"/>
    <property type="match status" value="1"/>
</dbReference>
<dbReference type="Gene3D" id="1.10.287.610">
    <property type="entry name" value="Helix hairpin bin"/>
    <property type="match status" value="1"/>
</dbReference>
<dbReference type="Gene3D" id="2.40.50.140">
    <property type="entry name" value="Nucleic acid-binding proteins"/>
    <property type="match status" value="1"/>
</dbReference>
<dbReference type="HAMAP" id="MF_01588">
    <property type="entry name" value="DNA_ligase_A"/>
    <property type="match status" value="1"/>
</dbReference>
<dbReference type="InterPro" id="IPR001357">
    <property type="entry name" value="BRCT_dom"/>
</dbReference>
<dbReference type="InterPro" id="IPR036420">
    <property type="entry name" value="BRCT_dom_sf"/>
</dbReference>
<dbReference type="InterPro" id="IPR041663">
    <property type="entry name" value="DisA/LigA_HHH"/>
</dbReference>
<dbReference type="InterPro" id="IPR001679">
    <property type="entry name" value="DNA_ligase"/>
</dbReference>
<dbReference type="InterPro" id="IPR018239">
    <property type="entry name" value="DNA_ligase_AS"/>
</dbReference>
<dbReference type="InterPro" id="IPR033136">
    <property type="entry name" value="DNA_ligase_CS"/>
</dbReference>
<dbReference type="InterPro" id="IPR013839">
    <property type="entry name" value="DNAligase_adenylation"/>
</dbReference>
<dbReference type="InterPro" id="IPR013840">
    <property type="entry name" value="DNAligase_N"/>
</dbReference>
<dbReference type="InterPro" id="IPR003583">
    <property type="entry name" value="Hlx-hairpin-Hlx_DNA-bd_motif"/>
</dbReference>
<dbReference type="InterPro" id="IPR012340">
    <property type="entry name" value="NA-bd_OB-fold"/>
</dbReference>
<dbReference type="InterPro" id="IPR004150">
    <property type="entry name" value="NAD_DNA_ligase_OB"/>
</dbReference>
<dbReference type="InterPro" id="IPR010994">
    <property type="entry name" value="RuvA_2-like"/>
</dbReference>
<dbReference type="InterPro" id="IPR004149">
    <property type="entry name" value="Znf_DNAligase_C4"/>
</dbReference>
<dbReference type="NCBIfam" id="TIGR00575">
    <property type="entry name" value="dnlj"/>
    <property type="match status" value="1"/>
</dbReference>
<dbReference type="NCBIfam" id="NF005932">
    <property type="entry name" value="PRK07956.1"/>
    <property type="match status" value="1"/>
</dbReference>
<dbReference type="PANTHER" id="PTHR23389">
    <property type="entry name" value="CHROMOSOME TRANSMISSION FIDELITY FACTOR 18"/>
    <property type="match status" value="1"/>
</dbReference>
<dbReference type="PANTHER" id="PTHR23389:SF9">
    <property type="entry name" value="DNA LIGASE"/>
    <property type="match status" value="1"/>
</dbReference>
<dbReference type="Pfam" id="PF00533">
    <property type="entry name" value="BRCT"/>
    <property type="match status" value="1"/>
</dbReference>
<dbReference type="Pfam" id="PF01653">
    <property type="entry name" value="DNA_ligase_aden"/>
    <property type="match status" value="1"/>
</dbReference>
<dbReference type="Pfam" id="PF03120">
    <property type="entry name" value="DNA_ligase_OB"/>
    <property type="match status" value="1"/>
</dbReference>
<dbReference type="Pfam" id="PF03119">
    <property type="entry name" value="DNA_ligase_ZBD"/>
    <property type="match status" value="1"/>
</dbReference>
<dbReference type="Pfam" id="PF12826">
    <property type="entry name" value="HHH_2"/>
    <property type="match status" value="1"/>
</dbReference>
<dbReference type="Pfam" id="PF14520">
    <property type="entry name" value="HHH_5"/>
    <property type="match status" value="1"/>
</dbReference>
<dbReference type="Pfam" id="PF22745">
    <property type="entry name" value="Nlig-Ia"/>
    <property type="match status" value="1"/>
</dbReference>
<dbReference type="PIRSF" id="PIRSF001604">
    <property type="entry name" value="LigA"/>
    <property type="match status" value="1"/>
</dbReference>
<dbReference type="SMART" id="SM00292">
    <property type="entry name" value="BRCT"/>
    <property type="match status" value="1"/>
</dbReference>
<dbReference type="SMART" id="SM00278">
    <property type="entry name" value="HhH1"/>
    <property type="match status" value="4"/>
</dbReference>
<dbReference type="SMART" id="SM00532">
    <property type="entry name" value="LIGANc"/>
    <property type="match status" value="1"/>
</dbReference>
<dbReference type="SUPFAM" id="SSF52113">
    <property type="entry name" value="BRCT domain"/>
    <property type="match status" value="1"/>
</dbReference>
<dbReference type="SUPFAM" id="SSF56091">
    <property type="entry name" value="DNA ligase/mRNA capping enzyme, catalytic domain"/>
    <property type="match status" value="1"/>
</dbReference>
<dbReference type="SUPFAM" id="SSF50249">
    <property type="entry name" value="Nucleic acid-binding proteins"/>
    <property type="match status" value="1"/>
</dbReference>
<dbReference type="SUPFAM" id="SSF47781">
    <property type="entry name" value="RuvA domain 2-like"/>
    <property type="match status" value="1"/>
</dbReference>
<dbReference type="PROSITE" id="PS50172">
    <property type="entry name" value="BRCT"/>
    <property type="match status" value="1"/>
</dbReference>
<dbReference type="PROSITE" id="PS01055">
    <property type="entry name" value="DNA_LIGASE_N1"/>
    <property type="match status" value="1"/>
</dbReference>
<dbReference type="PROSITE" id="PS01056">
    <property type="entry name" value="DNA_LIGASE_N2"/>
    <property type="match status" value="1"/>
</dbReference>
<gene>
    <name evidence="1" type="primary">ligA</name>
    <name type="ordered locus">SSON_2500</name>
</gene>
<protein>
    <recommendedName>
        <fullName evidence="1">DNA ligase</fullName>
        <ecNumber evidence="1">6.5.1.2</ecNumber>
    </recommendedName>
    <alternativeName>
        <fullName evidence="1">Polydeoxyribonucleotide synthase [NAD(+)]</fullName>
    </alternativeName>
</protein>
<keyword id="KW-0227">DNA damage</keyword>
<keyword id="KW-0234">DNA repair</keyword>
<keyword id="KW-0235">DNA replication</keyword>
<keyword id="KW-0436">Ligase</keyword>
<keyword id="KW-0460">Magnesium</keyword>
<keyword id="KW-0464">Manganese</keyword>
<keyword id="KW-0479">Metal-binding</keyword>
<keyword id="KW-0520">NAD</keyword>
<keyword id="KW-1185">Reference proteome</keyword>
<keyword id="KW-0862">Zinc</keyword>
<sequence>MESIEQQLTELRTTLRHHEYLYHVMDAPEIPDAEYDRLMRELRELETKHPELITPDSPTQRVGAAPLAAFSQIRHEVPMLSLDNVFDEESFLAFNKRVQDRLKNNEKVTWCCELKLDGLAVSILYENGVLVSAATRGDGTTGEDITSNVRTIRAIPLKLHGENIPARLEVRGEVFLPQAGFEKINEDARRTGGKVFANPRNAAAGSLRQLDPRITAKRPLTFFCYGVGVLEGGELPDTHLGRLLQFKKWGLPVSDRVTLCESAEEVLAFYHKVEEDRPTLGFDIDGVVIKVNSLEQQEQLGFVARAPRWAVAFKFPAQEQMTFVRDVEFQVGRTGAITPVARLEPVHVAGVLVSNATLHNADEIERLGLRIGDKVVIRRAGDVIPQVVNVVLSERPEDTREVVFPTHCPVCGSDVERVEGEAVARCTGGLICGAQRKESLKHFVSRRAMDVDGMGDKIIDQLVEKEYVHTPADLFKLTAGKLTGLERMGPKSAQNVVNALEKAKETTFARFLYALGIREVGEATAAGLAAYFGTLEVLEAASIEELQKVPDVGIVVASHVHNFFAEESNRNVISELLAEGVHWPAPIVINAEEIDSPFAGKTVVLTGSLSQMSRDDAKARLVELGAKVAGSVSKKTDLVIAGEAAGSKLAKAQELGIEVIDEAEMLRLLGS</sequence>
<accession>Q3YZD1</accession>
<reference key="1">
    <citation type="journal article" date="2005" name="Nucleic Acids Res.">
        <title>Genome dynamics and diversity of Shigella species, the etiologic agents of bacillary dysentery.</title>
        <authorList>
            <person name="Yang F."/>
            <person name="Yang J."/>
            <person name="Zhang X."/>
            <person name="Chen L."/>
            <person name="Jiang Y."/>
            <person name="Yan Y."/>
            <person name="Tang X."/>
            <person name="Wang J."/>
            <person name="Xiong Z."/>
            <person name="Dong J."/>
            <person name="Xue Y."/>
            <person name="Zhu Y."/>
            <person name="Xu X."/>
            <person name="Sun L."/>
            <person name="Chen S."/>
            <person name="Nie H."/>
            <person name="Peng J."/>
            <person name="Xu J."/>
            <person name="Wang Y."/>
            <person name="Yuan Z."/>
            <person name="Wen Y."/>
            <person name="Yao Z."/>
            <person name="Shen Y."/>
            <person name="Qiang B."/>
            <person name="Hou Y."/>
            <person name="Yu J."/>
            <person name="Jin Q."/>
        </authorList>
    </citation>
    <scope>NUCLEOTIDE SEQUENCE [LARGE SCALE GENOMIC DNA]</scope>
    <source>
        <strain>Ss046</strain>
    </source>
</reference>